<evidence type="ECO:0000250" key="1">
    <source>
        <dbReference type="UniProtKB" id="Q08288"/>
    </source>
</evidence>
<evidence type="ECO:0000255" key="2"/>
<evidence type="ECO:0000255" key="3">
    <source>
        <dbReference type="PROSITE-ProRule" id="PRU01145"/>
    </source>
</evidence>
<evidence type="ECO:0000256" key="4">
    <source>
        <dbReference type="SAM" id="MobiDB-lite"/>
    </source>
</evidence>
<evidence type="ECO:0000269" key="5">
    <source>
    </source>
</evidence>
<evidence type="ECO:0000269" key="6">
    <source>
    </source>
</evidence>
<evidence type="ECO:0000269" key="7">
    <source>
    </source>
</evidence>
<evidence type="ECO:0000269" key="8">
    <source>
    </source>
</evidence>
<evidence type="ECO:0000269" key="9">
    <source>
    </source>
</evidence>
<evidence type="ECO:0000269" key="10">
    <source>
    </source>
</evidence>
<evidence type="ECO:0000269" key="11">
    <source>
    </source>
</evidence>
<evidence type="ECO:0000305" key="12"/>
<evidence type="ECO:0007744" key="13">
    <source>
    </source>
</evidence>
<evidence type="ECO:0007744" key="14">
    <source>
    </source>
</evidence>
<evidence type="ECO:0007744" key="15">
    <source>
    </source>
</evidence>
<evidence type="ECO:0007829" key="16">
    <source>
        <dbReference type="PDB" id="6ZVH"/>
    </source>
</evidence>
<accession>Q9NX58</accession>
<accession>D3DVS4</accession>
<accession>Q6FI78</accession>
<accession>Q9NYS1</accession>
<organism>
    <name type="scientific">Homo sapiens</name>
    <name type="common">Human</name>
    <dbReference type="NCBI Taxonomy" id="9606"/>
    <lineage>
        <taxon>Eukaryota</taxon>
        <taxon>Metazoa</taxon>
        <taxon>Chordata</taxon>
        <taxon>Craniata</taxon>
        <taxon>Vertebrata</taxon>
        <taxon>Euteleostomi</taxon>
        <taxon>Mammalia</taxon>
        <taxon>Eutheria</taxon>
        <taxon>Euarchontoglires</taxon>
        <taxon>Primates</taxon>
        <taxon>Haplorrhini</taxon>
        <taxon>Catarrhini</taxon>
        <taxon>Hominidae</taxon>
        <taxon>Homo</taxon>
    </lineage>
</organism>
<sequence length="379" mass="43634">MVFFTCNACGESVKKIQVEKHVSVCRNCECLSCIDCGKDFWGDDYKNHVKCISEDQKYGGKGYEGKTHKGDIKQQAWIQKISELIKRPNVSPKVRELLEQISAFDNVPRKKAKFQNWMKNSLKVHNESILDQVWNIFSEASNSEPVNKEQDQRPLHPVANPHAEISTKVPASKVKDAVEQQGEVKKNKRERKEERQKKRKREKKELKLENHQENSRNQKPKKRKKGQEADLEAGGEEVPEANGSAGKRSKKKKQRKDSASEEEARVGAGKRKRRHSEVETDSKKKKMKLPEHPEGGEPEDDEAPAKGKFNWKGTIKAILKQAPDNEITIKKLRKKVLAQYYTVTDEHHRSEEELLVIFNKKISKNPTFKLLKDKVKLVK</sequence>
<dbReference type="EMBL" id="AL136750">
    <property type="protein sequence ID" value="CAB66684.1"/>
    <property type="molecule type" value="mRNA"/>
</dbReference>
<dbReference type="EMBL" id="AK000432">
    <property type="protein sequence ID" value="BAA91162.1"/>
    <property type="molecule type" value="mRNA"/>
</dbReference>
<dbReference type="EMBL" id="CR533548">
    <property type="protein sequence ID" value="CAG38579.1"/>
    <property type="molecule type" value="mRNA"/>
</dbReference>
<dbReference type="EMBL" id="AC011744">
    <property type="status" value="NOT_ANNOTATED_CDS"/>
    <property type="molecule type" value="Genomic_DNA"/>
</dbReference>
<dbReference type="EMBL" id="CH471131">
    <property type="protein sequence ID" value="EAW82437.1"/>
    <property type="molecule type" value="Genomic_DNA"/>
</dbReference>
<dbReference type="EMBL" id="CH471131">
    <property type="protein sequence ID" value="EAW82438.1"/>
    <property type="molecule type" value="Genomic_DNA"/>
</dbReference>
<dbReference type="EMBL" id="CH471131">
    <property type="protein sequence ID" value="EAW82439.1"/>
    <property type="molecule type" value="Genomic_DNA"/>
</dbReference>
<dbReference type="EMBL" id="BC015796">
    <property type="protein sequence ID" value="AAH15796.1"/>
    <property type="molecule type" value="mRNA"/>
</dbReference>
<dbReference type="EMBL" id="AF229835">
    <property type="protein sequence ID" value="AAF42870.1"/>
    <property type="molecule type" value="mRNA"/>
</dbReference>
<dbReference type="CCDS" id="CCDS3374.1"/>
<dbReference type="RefSeq" id="NP_001139197.1">
    <property type="nucleotide sequence ID" value="NM_001145725.2"/>
</dbReference>
<dbReference type="RefSeq" id="NP_060286.1">
    <property type="nucleotide sequence ID" value="NM_017816.3"/>
</dbReference>
<dbReference type="RefSeq" id="XP_011511807.1">
    <property type="nucleotide sequence ID" value="XM_011513505.2"/>
</dbReference>
<dbReference type="RefSeq" id="XP_011511808.1">
    <property type="nucleotide sequence ID" value="XM_011513506.4"/>
</dbReference>
<dbReference type="RefSeq" id="XP_054206435.1">
    <property type="nucleotide sequence ID" value="XM_054350460.1"/>
</dbReference>
<dbReference type="RefSeq" id="XP_054206436.1">
    <property type="nucleotide sequence ID" value="XM_054350461.1"/>
</dbReference>
<dbReference type="PDB" id="6ZMI">
    <property type="method" value="EM"/>
    <property type="resolution" value="2.60 A"/>
    <property type="chains" value="CE=1-379"/>
</dbReference>
<dbReference type="PDB" id="6ZMO">
    <property type="method" value="EM"/>
    <property type="resolution" value="3.10 A"/>
    <property type="chains" value="CE=1-379"/>
</dbReference>
<dbReference type="PDB" id="6ZVH">
    <property type="method" value="EM"/>
    <property type="resolution" value="2.90 A"/>
    <property type="chains" value="y=308-379"/>
</dbReference>
<dbReference type="PDBsum" id="6ZMI"/>
<dbReference type="PDBsum" id="6ZMO"/>
<dbReference type="PDBsum" id="6ZVH"/>
<dbReference type="EMDB" id="EMD-11292"/>
<dbReference type="EMDB" id="EMD-11299"/>
<dbReference type="EMDB" id="EMD-11456"/>
<dbReference type="SMR" id="Q9NX58"/>
<dbReference type="BioGRID" id="120780">
    <property type="interactions" value="389"/>
</dbReference>
<dbReference type="CORUM" id="Q9NX58"/>
<dbReference type="FunCoup" id="Q9NX58">
    <property type="interactions" value="1962"/>
</dbReference>
<dbReference type="IntAct" id="Q9NX58">
    <property type="interactions" value="242"/>
</dbReference>
<dbReference type="MINT" id="Q9NX58"/>
<dbReference type="STRING" id="9606.ENSP00000345917"/>
<dbReference type="GlyGen" id="Q9NX58">
    <property type="glycosylation" value="1 site, 1 O-linked glycan (1 site)"/>
</dbReference>
<dbReference type="iPTMnet" id="Q9NX58"/>
<dbReference type="MetOSite" id="Q9NX58"/>
<dbReference type="PhosphoSitePlus" id="Q9NX58"/>
<dbReference type="SwissPalm" id="Q9NX58"/>
<dbReference type="BioMuta" id="LYAR"/>
<dbReference type="DMDM" id="71153817"/>
<dbReference type="jPOST" id="Q9NX58"/>
<dbReference type="MassIVE" id="Q9NX58"/>
<dbReference type="PaxDb" id="9606-ENSP00000345917"/>
<dbReference type="PeptideAtlas" id="Q9NX58"/>
<dbReference type="ProteomicsDB" id="83045"/>
<dbReference type="Pumba" id="Q9NX58"/>
<dbReference type="Antibodypedia" id="22562">
    <property type="antibodies" value="229 antibodies from 29 providers"/>
</dbReference>
<dbReference type="DNASU" id="55646"/>
<dbReference type="Ensembl" id="ENST00000343470.9">
    <property type="protein sequence ID" value="ENSP00000345917.4"/>
    <property type="gene ID" value="ENSG00000145220.14"/>
</dbReference>
<dbReference type="Ensembl" id="ENST00000452476.5">
    <property type="protein sequence ID" value="ENSP00000397367.1"/>
    <property type="gene ID" value="ENSG00000145220.14"/>
</dbReference>
<dbReference type="GeneID" id="55646"/>
<dbReference type="KEGG" id="hsa:55646"/>
<dbReference type="MANE-Select" id="ENST00000343470.9">
    <property type="protein sequence ID" value="ENSP00000345917.4"/>
    <property type="RefSeq nucleotide sequence ID" value="NM_017816.3"/>
    <property type="RefSeq protein sequence ID" value="NP_060286.1"/>
</dbReference>
<dbReference type="UCSC" id="uc003ght.4">
    <property type="organism name" value="human"/>
</dbReference>
<dbReference type="AGR" id="HGNC:26021"/>
<dbReference type="CTD" id="55646"/>
<dbReference type="DisGeNET" id="55646"/>
<dbReference type="GeneCards" id="LYAR"/>
<dbReference type="HGNC" id="HGNC:26021">
    <property type="gene designation" value="LYAR"/>
</dbReference>
<dbReference type="HPA" id="ENSG00000145220">
    <property type="expression patterns" value="Tissue enriched (testis)"/>
</dbReference>
<dbReference type="MIM" id="617684">
    <property type="type" value="gene"/>
</dbReference>
<dbReference type="neXtProt" id="NX_Q9NX58"/>
<dbReference type="OpenTargets" id="ENSG00000145220"/>
<dbReference type="PharmGKB" id="PA162394697"/>
<dbReference type="VEuPathDB" id="HostDB:ENSG00000145220"/>
<dbReference type="eggNOG" id="KOG2186">
    <property type="taxonomic scope" value="Eukaryota"/>
</dbReference>
<dbReference type="GeneTree" id="ENSGT00390000003477"/>
<dbReference type="HOGENOM" id="CLU_057137_0_0_1"/>
<dbReference type="InParanoid" id="Q9NX58"/>
<dbReference type="OMA" id="QNWIKNS"/>
<dbReference type="OrthoDB" id="21474at2759"/>
<dbReference type="PAN-GO" id="Q9NX58">
    <property type="GO annotations" value="4 GO annotations based on evolutionary models"/>
</dbReference>
<dbReference type="PhylomeDB" id="Q9NX58"/>
<dbReference type="TreeFam" id="TF314925"/>
<dbReference type="PathwayCommons" id="Q9NX58"/>
<dbReference type="SignaLink" id="Q9NX58"/>
<dbReference type="BioGRID-ORCS" id="55646">
    <property type="hits" value="16 hits in 1159 CRISPR screens"/>
</dbReference>
<dbReference type="CD-CODE" id="232F8A39">
    <property type="entry name" value="P-body"/>
</dbReference>
<dbReference type="CD-CODE" id="91857CE7">
    <property type="entry name" value="Nucleolus"/>
</dbReference>
<dbReference type="ChiTaRS" id="LYAR">
    <property type="organism name" value="human"/>
</dbReference>
<dbReference type="GeneWiki" id="LYAR"/>
<dbReference type="GenomeRNAi" id="55646"/>
<dbReference type="Pharos" id="Q9NX58">
    <property type="development level" value="Tbio"/>
</dbReference>
<dbReference type="PRO" id="PR:Q9NX58"/>
<dbReference type="Proteomes" id="UP000005640">
    <property type="component" value="Chromosome 4"/>
</dbReference>
<dbReference type="RNAct" id="Q9NX58">
    <property type="molecule type" value="protein"/>
</dbReference>
<dbReference type="Bgee" id="ENSG00000145220">
    <property type="expression patterns" value="Expressed in secondary oocyte and 185 other cell types or tissues"/>
</dbReference>
<dbReference type="ExpressionAtlas" id="Q9NX58">
    <property type="expression patterns" value="baseline and differential"/>
</dbReference>
<dbReference type="GO" id="GO:0005737">
    <property type="term" value="C:cytoplasm"/>
    <property type="evidence" value="ECO:0007669"/>
    <property type="project" value="UniProtKB-SubCell"/>
</dbReference>
<dbReference type="GO" id="GO:0005730">
    <property type="term" value="C:nucleolus"/>
    <property type="evidence" value="ECO:0000314"/>
    <property type="project" value="UniProtKB"/>
</dbReference>
<dbReference type="GO" id="GO:0005654">
    <property type="term" value="C:nucleoplasm"/>
    <property type="evidence" value="ECO:0000314"/>
    <property type="project" value="HPA"/>
</dbReference>
<dbReference type="GO" id="GO:0005634">
    <property type="term" value="C:nucleus"/>
    <property type="evidence" value="ECO:0000314"/>
    <property type="project" value="UniProtKB"/>
</dbReference>
<dbReference type="GO" id="GO:0001750">
    <property type="term" value="C:photoreceptor outer segment"/>
    <property type="evidence" value="ECO:0000250"/>
    <property type="project" value="UniProtKB"/>
</dbReference>
<dbReference type="GO" id="GO:0003677">
    <property type="term" value="F:DNA binding"/>
    <property type="evidence" value="ECO:0000314"/>
    <property type="project" value="UniProtKB"/>
</dbReference>
<dbReference type="GO" id="GO:0140297">
    <property type="term" value="F:DNA-binding transcription factor binding"/>
    <property type="evidence" value="ECO:0000353"/>
    <property type="project" value="ARUK-UCL"/>
</dbReference>
<dbReference type="GO" id="GO:0042802">
    <property type="term" value="F:identical protein binding"/>
    <property type="evidence" value="ECO:0000353"/>
    <property type="project" value="IntAct"/>
</dbReference>
<dbReference type="GO" id="GO:0003723">
    <property type="term" value="F:RNA binding"/>
    <property type="evidence" value="ECO:0007005"/>
    <property type="project" value="UniProtKB"/>
</dbReference>
<dbReference type="GO" id="GO:0140416">
    <property type="term" value="F:transcription regulator inhibitor activity"/>
    <property type="evidence" value="ECO:0000314"/>
    <property type="project" value="ARUK-UCL"/>
</dbReference>
<dbReference type="GO" id="GO:0008270">
    <property type="term" value="F:zinc ion binding"/>
    <property type="evidence" value="ECO:0007669"/>
    <property type="project" value="UniProtKB-KW"/>
</dbReference>
<dbReference type="GO" id="GO:0048821">
    <property type="term" value="P:erythrocyte development"/>
    <property type="evidence" value="ECO:0000315"/>
    <property type="project" value="UniProtKB"/>
</dbReference>
<dbReference type="GO" id="GO:0045087">
    <property type="term" value="P:innate immune response"/>
    <property type="evidence" value="ECO:0007669"/>
    <property type="project" value="UniProtKB-KW"/>
</dbReference>
<dbReference type="GO" id="GO:0045824">
    <property type="term" value="P:negative regulation of innate immune response"/>
    <property type="evidence" value="ECO:0000314"/>
    <property type="project" value="ARUK-UCL"/>
</dbReference>
<dbReference type="GO" id="GO:0000122">
    <property type="term" value="P:negative regulation of transcription by RNA polymerase II"/>
    <property type="evidence" value="ECO:0000314"/>
    <property type="project" value="ARUK-UCL"/>
</dbReference>
<dbReference type="GO" id="GO:0050766">
    <property type="term" value="P:positive regulation of phagocytosis"/>
    <property type="evidence" value="ECO:0000250"/>
    <property type="project" value="UniProtKB"/>
</dbReference>
<dbReference type="GO" id="GO:0045943">
    <property type="term" value="P:positive regulation of transcription by RNA polymerase I"/>
    <property type="evidence" value="ECO:0000314"/>
    <property type="project" value="ARUK-UCL"/>
</dbReference>
<dbReference type="GO" id="GO:0006364">
    <property type="term" value="P:rRNA processing"/>
    <property type="evidence" value="ECO:0000315"/>
    <property type="project" value="UniProtKB"/>
</dbReference>
<dbReference type="FunFam" id="1.10.10.2100:FF:000002">
    <property type="entry name" value="cell growth-regulating nucleolar protein-like"/>
    <property type="match status" value="1"/>
</dbReference>
<dbReference type="FunFam" id="3.30.1490.490:FF:000001">
    <property type="entry name" value="cell growth-regulating nucleolar protein-like"/>
    <property type="match status" value="1"/>
</dbReference>
<dbReference type="Gene3D" id="1.10.10.2100">
    <property type="match status" value="1"/>
</dbReference>
<dbReference type="Gene3D" id="3.30.1490.490">
    <property type="match status" value="1"/>
</dbReference>
<dbReference type="InterPro" id="IPR039999">
    <property type="entry name" value="LYAR"/>
</dbReference>
<dbReference type="InterPro" id="IPR041010">
    <property type="entry name" value="Znf-ACC"/>
</dbReference>
<dbReference type="InterPro" id="IPR014898">
    <property type="entry name" value="Znf_C2H2_LYAR"/>
</dbReference>
<dbReference type="InterPro" id="IPR036236">
    <property type="entry name" value="Znf_C2H2_sf"/>
</dbReference>
<dbReference type="PANTHER" id="PTHR13100:SF10">
    <property type="entry name" value="CELL GROWTH-REGULATING NUCLEOLAR PROTEIN"/>
    <property type="match status" value="1"/>
</dbReference>
<dbReference type="PANTHER" id="PTHR13100">
    <property type="entry name" value="CELL GROWTH-REGULATING NUCLEOLAR PROTEIN LYAR"/>
    <property type="match status" value="1"/>
</dbReference>
<dbReference type="Pfam" id="PF08790">
    <property type="entry name" value="zf-LYAR"/>
    <property type="match status" value="1"/>
</dbReference>
<dbReference type="Pfam" id="PF17848">
    <property type="entry name" value="Zn_ribbon_ACC"/>
    <property type="match status" value="1"/>
</dbReference>
<dbReference type="SUPFAM" id="SSF57667">
    <property type="entry name" value="beta-beta-alpha zinc fingers"/>
    <property type="match status" value="2"/>
</dbReference>
<dbReference type="PROSITE" id="PS51804">
    <property type="entry name" value="ZF_C2HC_LYAR"/>
    <property type="match status" value="2"/>
</dbReference>
<feature type="chain" id="PRO_0000084528" description="Cell growth-regulating nucleolar protein">
    <location>
        <begin position="1"/>
        <end position="379"/>
    </location>
</feature>
<feature type="zinc finger region" description="C2HC LYAR-type 1" evidence="3">
    <location>
        <begin position="1"/>
        <end position="26"/>
    </location>
</feature>
<feature type="zinc finger region" description="C2HC LYAR-type 2" evidence="3">
    <location>
        <begin position="28"/>
        <end position="52"/>
    </location>
</feature>
<feature type="region of interest" description="Disordered" evidence="4">
    <location>
        <begin position="161"/>
        <end position="307"/>
    </location>
</feature>
<feature type="coiled-coil region" evidence="2">
    <location>
        <begin position="175"/>
        <end position="219"/>
    </location>
</feature>
<feature type="compositionally biased region" description="Basic and acidic residues" evidence="4">
    <location>
        <begin position="173"/>
        <end position="196"/>
    </location>
</feature>
<feature type="compositionally biased region" description="Basic and acidic residues" evidence="4">
    <location>
        <begin position="203"/>
        <end position="216"/>
    </location>
</feature>
<feature type="compositionally biased region" description="Acidic residues" evidence="4">
    <location>
        <begin position="229"/>
        <end position="239"/>
    </location>
</feature>
<feature type="compositionally biased region" description="Basic and acidic residues" evidence="4">
    <location>
        <begin position="256"/>
        <end position="265"/>
    </location>
</feature>
<feature type="compositionally biased region" description="Basic and acidic residues" evidence="4">
    <location>
        <begin position="276"/>
        <end position="295"/>
    </location>
</feature>
<feature type="binding site" evidence="3">
    <location>
        <position position="6"/>
    </location>
    <ligand>
        <name>Zn(2+)</name>
        <dbReference type="ChEBI" id="CHEBI:29105"/>
        <label>1</label>
    </ligand>
</feature>
<feature type="binding site" evidence="3">
    <location>
        <position position="9"/>
    </location>
    <ligand>
        <name>Zn(2+)</name>
        <dbReference type="ChEBI" id="CHEBI:29105"/>
        <label>1</label>
    </ligand>
</feature>
<feature type="binding site" evidence="3">
    <location>
        <position position="21"/>
    </location>
    <ligand>
        <name>Zn(2+)</name>
        <dbReference type="ChEBI" id="CHEBI:29105"/>
        <label>1</label>
    </ligand>
</feature>
<feature type="binding site" evidence="3">
    <location>
        <position position="25"/>
    </location>
    <ligand>
        <name>Zn(2+)</name>
        <dbReference type="ChEBI" id="CHEBI:29105"/>
        <label>1</label>
    </ligand>
</feature>
<feature type="binding site" evidence="3">
    <location>
        <position position="33"/>
    </location>
    <ligand>
        <name>Zn(2+)</name>
        <dbReference type="ChEBI" id="CHEBI:29105"/>
        <label>2</label>
    </ligand>
</feature>
<feature type="binding site" evidence="3">
    <location>
        <position position="36"/>
    </location>
    <ligand>
        <name>Zn(2+)</name>
        <dbReference type="ChEBI" id="CHEBI:29105"/>
        <label>2</label>
    </ligand>
</feature>
<feature type="binding site" evidence="3">
    <location>
        <position position="48"/>
    </location>
    <ligand>
        <name>Zn(2+)</name>
        <dbReference type="ChEBI" id="CHEBI:29105"/>
        <label>2</label>
    </ligand>
</feature>
<feature type="binding site" evidence="3">
    <location>
        <position position="51"/>
    </location>
    <ligand>
        <name>Zn(2+)</name>
        <dbReference type="ChEBI" id="CHEBI:29105"/>
        <label>2</label>
    </ligand>
</feature>
<feature type="modified residue" description="Phosphoserine" evidence="13">
    <location>
        <position position="215"/>
    </location>
</feature>
<feature type="modified residue" description="Phosphoserine" evidence="13">
    <location>
        <position position="244"/>
    </location>
</feature>
<feature type="cross-link" description="Glycyl lysine isopeptide (Lys-Gly) (interchain with G-Cter in SUMO2)" evidence="15">
    <location>
        <position position="14"/>
    </location>
</feature>
<feature type="cross-link" description="Glycyl lysine isopeptide (Lys-Gly) (interchain with G-Cter in SUMO2)" evidence="14 15">
    <location>
        <position position="207"/>
    </location>
</feature>
<feature type="sequence variant" id="VAR_023080" description="In dbSNP:rs2272739.">
    <original>D</original>
    <variation>Y</variation>
    <location>
        <position position="151"/>
    </location>
</feature>
<feature type="sequence variant" id="VAR_023081" description="In dbSNP:rs7376390.">
    <original>R</original>
    <variation>H</variation>
    <location>
        <position position="265"/>
    </location>
</feature>
<feature type="mutagenesis site" description="Decreases the production of 28S rRNA and the formation of pre-60S particle." evidence="6">
    <location>
        <begin position="1"/>
        <end position="58"/>
    </location>
</feature>
<feature type="sequence conflict" description="In Ref. 3; CAG38579." evidence="12" ref="3">
    <original>H</original>
    <variation>R</variation>
    <location>
        <position position="21"/>
    </location>
</feature>
<feature type="helix" evidence="16">
    <location>
        <begin position="311"/>
        <end position="320"/>
    </location>
</feature>
<feature type="helix" evidence="16">
    <location>
        <begin position="323"/>
        <end position="325"/>
    </location>
</feature>
<feature type="strand" evidence="16">
    <location>
        <begin position="326"/>
        <end position="328"/>
    </location>
</feature>
<feature type="helix" evidence="16">
    <location>
        <begin position="329"/>
        <end position="343"/>
    </location>
</feature>
<feature type="helix" evidence="16">
    <location>
        <begin position="351"/>
        <end position="363"/>
    </location>
</feature>
<feature type="strand" evidence="16">
    <location>
        <begin position="368"/>
        <end position="370"/>
    </location>
</feature>
<feature type="strand" evidence="16">
    <location>
        <begin position="372"/>
        <end position="377"/>
    </location>
</feature>
<keyword id="KW-0002">3D-structure</keyword>
<keyword id="KW-0966">Cell projection</keyword>
<keyword id="KW-0175">Coiled coil</keyword>
<keyword id="KW-0963">Cytoplasm</keyword>
<keyword id="KW-0238">DNA-binding</keyword>
<keyword id="KW-0391">Immunity</keyword>
<keyword id="KW-0399">Innate immunity</keyword>
<keyword id="KW-1017">Isopeptide bond</keyword>
<keyword id="KW-0479">Metal-binding</keyword>
<keyword id="KW-0539">Nucleus</keyword>
<keyword id="KW-0597">Phosphoprotein</keyword>
<keyword id="KW-1267">Proteomics identification</keyword>
<keyword id="KW-1185">Reference proteome</keyword>
<keyword id="KW-0677">Repeat</keyword>
<keyword id="KW-0678">Repressor</keyword>
<keyword id="KW-0698">rRNA processing</keyword>
<keyword id="KW-0804">Transcription</keyword>
<keyword id="KW-0805">Transcription regulation</keyword>
<keyword id="KW-0832">Ubl conjugation</keyword>
<keyword id="KW-0862">Zinc</keyword>
<keyword id="KW-0863">Zinc-finger</keyword>
<name>LYAR_HUMAN</name>
<gene>
    <name type="primary">LYAR</name>
    <name type="ORF">PNAS-5</name>
</gene>
<protein>
    <recommendedName>
        <fullName>Cell growth-regulating nucleolar protein</fullName>
    </recommendedName>
</protein>
<proteinExistence type="evidence at protein level"/>
<comment type="function">
    <text evidence="1 6 8 10 11">Plays a role in the maintenance of the appropriate processing of 47S/45S pre-rRNA to 32S/30S pre-rRNAs and their subsequent processing to produce 18S and 28S rRNAs (PubMed:24495227). Also acts at the level of transcription regulation. Along with PRMT5, binds the gamma-globin (HBG1/HBG2) promoter and represses its expression (PubMed:25092918). In neuroblastoma cells, may also repress the expression of oxidative stress genes, including CHAC1, HMOX1, SLC7A11, ULBP1 and SNORD41 that encodes a small nucleolar RNA (PubMed:28686580). Preferentially binds to a DNA motif containing 5'-GGTTAT-3' (PubMed:25092918). Negatively regulates the antiviral innate immune response by targeting IRF3 and impairing its DNA-binding activity (PubMed:31413131). In addition, inhibits NF-kappa-B-mediated expression of pro-inflammatory cytokines (PubMed:31413131). Stimulates phagocytosis of photoreceptor outer segments by retinal pigment epithelial cells (By similarity). Prevents nucleolin/NCL self-cleavage, maintaining a normal steady-state level of NCL protein in undifferentiated embryonic stem cells (ESCs), which in turn is essential for ESC self-renewal (By similarity).</text>
</comment>
<comment type="subunit">
    <text evidence="1 8 9 11">Interacts with PRMT5; this interaction is direct (PubMed:25092918). Interacts with GNL2 and RPL23A (PubMed:26203195). Interacts with nucleolin/NCL; this interaction is direct (By similarity). Interacts with phosphorylated IRF3; this interaction impairs IRF3 DNA-binding activity (PubMed:31413131).</text>
</comment>
<comment type="interaction">
    <interactant intactId="EBI-713507">
        <id>Q9NX58</id>
    </interactant>
    <interactant intactId="EBI-10181188">
        <id>Q8N7W2-2</id>
        <label>BEND7</label>
    </interactant>
    <organismsDiffer>false</organismsDiffer>
    <experiments>3</experiments>
</comment>
<comment type="interaction">
    <interactant intactId="EBI-713507">
        <id>Q9NX58</id>
    </interactant>
    <interactant intactId="EBI-713507">
        <id>Q9NX58</id>
        <label>LYAR</label>
    </interactant>
    <organismsDiffer>false</organismsDiffer>
    <experiments>3</experiments>
</comment>
<comment type="interaction">
    <interactant intactId="EBI-713507">
        <id>Q9NX58</id>
    </interactant>
    <interactant intactId="EBI-713955">
        <id>O75569</id>
        <label>PRKRA</label>
    </interactant>
    <organismsDiffer>false</organismsDiffer>
    <experiments>7</experiments>
</comment>
<comment type="interaction">
    <interactant intactId="EBI-713507">
        <id>Q9NX58</id>
    </interactant>
    <interactant intactId="EBI-742426">
        <id>Q9H190</id>
        <label>SDCBP2</label>
    </interactant>
    <organismsDiffer>false</organismsDiffer>
    <experiments>8</experiments>
</comment>
<comment type="interaction">
    <interactant intactId="EBI-713507">
        <id>Q9NX58</id>
    </interactant>
    <interactant intactId="EBI-10268630">
        <id>Q8N9Q2</id>
        <label>SREK1IP1</label>
    </interactant>
    <organismsDiffer>false</organismsDiffer>
    <experiments>3</experiments>
</comment>
<comment type="interaction">
    <interactant intactId="EBI-713507">
        <id>Q9NX58</id>
    </interactant>
    <interactant intactId="EBI-25475856">
        <id>P0DTC9</id>
        <label>N</label>
    </interactant>
    <organismsDiffer>true</organismsDiffer>
    <experiments>6</experiments>
</comment>
<comment type="interaction">
    <interactant intactId="EBI-713507">
        <id>Q9NX58</id>
    </interactant>
    <interactant intactId="EBI-20625235">
        <id>A0A142I5B9</id>
    </interactant>
    <organismsDiffer>true</organismsDiffer>
    <experiments>2</experiments>
</comment>
<comment type="subcellular location">
    <subcellularLocation>
        <location evidence="8 11">Nucleus</location>
    </subcellularLocation>
    <subcellularLocation>
        <location evidence="5 6">Nucleus</location>
        <location evidence="5 6">Nucleolus</location>
    </subcellularLocation>
    <subcellularLocation>
        <location evidence="7">Cytoplasm</location>
    </subcellularLocation>
    <subcellularLocation>
        <location evidence="1">Cell projection</location>
        <location evidence="1">Cilium</location>
        <location evidence="1">Photoreceptor outer segment</location>
    </subcellularLocation>
    <text evidence="1 6 7">Component of pre-ribosomal particles, including pre-40S, pre-60S and pre-90S (PubMed:24495227). Associated with cytoplasmic ribosomes, but not polysomes, as a component of the 60S subunit (PubMed:24990247). In the retina, predominantly expressed in photoreceptor outer segments (By similarity). In the nucleolus, colocalizes with nucleolin/NCL, therefore may reside in the dense fibrillar component (DFC) (By similarity).</text>
</comment>
<comment type="tissue specificity">
    <text evidence="7">Predominantly expressed in testis.</text>
</comment>
<comment type="developmental stage">
    <text evidence="8">In an ex vivo erythroid culture system, highly expressed from early (preproerythroblasts) to mid (basophilic normoblasts) maturation. Markedly reduced in more mature erythroblasts (at protein level). The decrease in LYAR protein correlates with the rise of beta-globin (HBB) mRNA levels during erythroid cell differentiation.</text>
</comment>
<comment type="induction">
    <text evidence="10 11">Induced by MYCN (PubMed:28686580). Induced by interferon-beta (PubMed:31413131).</text>
</comment>
<comment type="domain">
    <text evidence="6">The N-terminal zinc-finger domains are required for the appropriate production of 28S rRNA and the formation of pre-60S particles.</text>
</comment>
<reference key="1">
    <citation type="journal article" date="2001" name="Genome Res.">
        <title>Towards a catalog of human genes and proteins: sequencing and analysis of 500 novel complete protein coding human cDNAs.</title>
        <authorList>
            <person name="Wiemann S."/>
            <person name="Weil B."/>
            <person name="Wellenreuther R."/>
            <person name="Gassenhuber J."/>
            <person name="Glassl S."/>
            <person name="Ansorge W."/>
            <person name="Boecher M."/>
            <person name="Bloecker H."/>
            <person name="Bauersachs S."/>
            <person name="Blum H."/>
            <person name="Lauber J."/>
            <person name="Duesterhoeft A."/>
            <person name="Beyer A."/>
            <person name="Koehrer K."/>
            <person name="Strack N."/>
            <person name="Mewes H.-W."/>
            <person name="Ottenwaelder B."/>
            <person name="Obermaier B."/>
            <person name="Tampe J."/>
            <person name="Heubner D."/>
            <person name="Wambutt R."/>
            <person name="Korn B."/>
            <person name="Klein M."/>
            <person name="Poustka A."/>
        </authorList>
    </citation>
    <scope>NUCLEOTIDE SEQUENCE [LARGE SCALE MRNA]</scope>
    <source>
        <tissue>Testis</tissue>
    </source>
</reference>
<reference key="2">
    <citation type="journal article" date="2004" name="Nat. Genet.">
        <title>Complete sequencing and characterization of 21,243 full-length human cDNAs.</title>
        <authorList>
            <person name="Ota T."/>
            <person name="Suzuki Y."/>
            <person name="Nishikawa T."/>
            <person name="Otsuki T."/>
            <person name="Sugiyama T."/>
            <person name="Irie R."/>
            <person name="Wakamatsu A."/>
            <person name="Hayashi K."/>
            <person name="Sato H."/>
            <person name="Nagai K."/>
            <person name="Kimura K."/>
            <person name="Makita H."/>
            <person name="Sekine M."/>
            <person name="Obayashi M."/>
            <person name="Nishi T."/>
            <person name="Shibahara T."/>
            <person name="Tanaka T."/>
            <person name="Ishii S."/>
            <person name="Yamamoto J."/>
            <person name="Saito K."/>
            <person name="Kawai Y."/>
            <person name="Isono Y."/>
            <person name="Nakamura Y."/>
            <person name="Nagahari K."/>
            <person name="Murakami K."/>
            <person name="Yasuda T."/>
            <person name="Iwayanagi T."/>
            <person name="Wagatsuma M."/>
            <person name="Shiratori A."/>
            <person name="Sudo H."/>
            <person name="Hosoiri T."/>
            <person name="Kaku Y."/>
            <person name="Kodaira H."/>
            <person name="Kondo H."/>
            <person name="Sugawara M."/>
            <person name="Takahashi M."/>
            <person name="Kanda K."/>
            <person name="Yokoi T."/>
            <person name="Furuya T."/>
            <person name="Kikkawa E."/>
            <person name="Omura Y."/>
            <person name="Abe K."/>
            <person name="Kamihara K."/>
            <person name="Katsuta N."/>
            <person name="Sato K."/>
            <person name="Tanikawa M."/>
            <person name="Yamazaki M."/>
            <person name="Ninomiya K."/>
            <person name="Ishibashi T."/>
            <person name="Yamashita H."/>
            <person name="Murakawa K."/>
            <person name="Fujimori K."/>
            <person name="Tanai H."/>
            <person name="Kimata M."/>
            <person name="Watanabe M."/>
            <person name="Hiraoka S."/>
            <person name="Chiba Y."/>
            <person name="Ishida S."/>
            <person name="Ono Y."/>
            <person name="Takiguchi S."/>
            <person name="Watanabe S."/>
            <person name="Yosida M."/>
            <person name="Hotuta T."/>
            <person name="Kusano J."/>
            <person name="Kanehori K."/>
            <person name="Takahashi-Fujii A."/>
            <person name="Hara H."/>
            <person name="Tanase T.-O."/>
            <person name="Nomura Y."/>
            <person name="Togiya S."/>
            <person name="Komai F."/>
            <person name="Hara R."/>
            <person name="Takeuchi K."/>
            <person name="Arita M."/>
            <person name="Imose N."/>
            <person name="Musashino K."/>
            <person name="Yuuki H."/>
            <person name="Oshima A."/>
            <person name="Sasaki N."/>
            <person name="Aotsuka S."/>
            <person name="Yoshikawa Y."/>
            <person name="Matsunawa H."/>
            <person name="Ichihara T."/>
            <person name="Shiohata N."/>
            <person name="Sano S."/>
            <person name="Moriya S."/>
            <person name="Momiyama H."/>
            <person name="Satoh N."/>
            <person name="Takami S."/>
            <person name="Terashima Y."/>
            <person name="Suzuki O."/>
            <person name="Nakagawa S."/>
            <person name="Senoh A."/>
            <person name="Mizoguchi H."/>
            <person name="Goto Y."/>
            <person name="Shimizu F."/>
            <person name="Wakebe H."/>
            <person name="Hishigaki H."/>
            <person name="Watanabe T."/>
            <person name="Sugiyama A."/>
            <person name="Takemoto M."/>
            <person name="Kawakami B."/>
            <person name="Yamazaki M."/>
            <person name="Watanabe K."/>
            <person name="Kumagai A."/>
            <person name="Itakura S."/>
            <person name="Fukuzumi Y."/>
            <person name="Fujimori Y."/>
            <person name="Komiyama M."/>
            <person name="Tashiro H."/>
            <person name="Tanigami A."/>
            <person name="Fujiwara T."/>
            <person name="Ono T."/>
            <person name="Yamada K."/>
            <person name="Fujii Y."/>
            <person name="Ozaki K."/>
            <person name="Hirao M."/>
            <person name="Ohmori Y."/>
            <person name="Kawabata A."/>
            <person name="Hikiji T."/>
            <person name="Kobatake N."/>
            <person name="Inagaki H."/>
            <person name="Ikema Y."/>
            <person name="Okamoto S."/>
            <person name="Okitani R."/>
            <person name="Kawakami T."/>
            <person name="Noguchi S."/>
            <person name="Itoh T."/>
            <person name="Shigeta K."/>
            <person name="Senba T."/>
            <person name="Matsumura K."/>
            <person name="Nakajima Y."/>
            <person name="Mizuno T."/>
            <person name="Morinaga M."/>
            <person name="Sasaki M."/>
            <person name="Togashi T."/>
            <person name="Oyama M."/>
            <person name="Hata H."/>
            <person name="Watanabe M."/>
            <person name="Komatsu T."/>
            <person name="Mizushima-Sugano J."/>
            <person name="Satoh T."/>
            <person name="Shirai Y."/>
            <person name="Takahashi Y."/>
            <person name="Nakagawa K."/>
            <person name="Okumura K."/>
            <person name="Nagase T."/>
            <person name="Nomura N."/>
            <person name="Kikuchi H."/>
            <person name="Masuho Y."/>
            <person name="Yamashita R."/>
            <person name="Nakai K."/>
            <person name="Yada T."/>
            <person name="Nakamura Y."/>
            <person name="Ohara O."/>
            <person name="Isogai T."/>
            <person name="Sugano S."/>
        </authorList>
    </citation>
    <scope>NUCLEOTIDE SEQUENCE [LARGE SCALE MRNA]</scope>
</reference>
<reference key="3">
    <citation type="submission" date="2004-06" db="EMBL/GenBank/DDBJ databases">
        <title>Cloning of human full open reading frames in Gateway(TM) system entry vector (pDONR201).</title>
        <authorList>
            <person name="Ebert L."/>
            <person name="Schick M."/>
            <person name="Neubert P."/>
            <person name="Schatten R."/>
            <person name="Henze S."/>
            <person name="Korn B."/>
        </authorList>
    </citation>
    <scope>NUCLEOTIDE SEQUENCE [LARGE SCALE MRNA]</scope>
</reference>
<reference key="4">
    <citation type="journal article" date="2005" name="Nature">
        <title>Generation and annotation of the DNA sequences of human chromosomes 2 and 4.</title>
        <authorList>
            <person name="Hillier L.W."/>
            <person name="Graves T.A."/>
            <person name="Fulton R.S."/>
            <person name="Fulton L.A."/>
            <person name="Pepin K.H."/>
            <person name="Minx P."/>
            <person name="Wagner-McPherson C."/>
            <person name="Layman D."/>
            <person name="Wylie K."/>
            <person name="Sekhon M."/>
            <person name="Becker M.C."/>
            <person name="Fewell G.A."/>
            <person name="Delehaunty K.D."/>
            <person name="Miner T.L."/>
            <person name="Nash W.E."/>
            <person name="Kremitzki C."/>
            <person name="Oddy L."/>
            <person name="Du H."/>
            <person name="Sun H."/>
            <person name="Bradshaw-Cordum H."/>
            <person name="Ali J."/>
            <person name="Carter J."/>
            <person name="Cordes M."/>
            <person name="Harris A."/>
            <person name="Isak A."/>
            <person name="van Brunt A."/>
            <person name="Nguyen C."/>
            <person name="Du F."/>
            <person name="Courtney L."/>
            <person name="Kalicki J."/>
            <person name="Ozersky P."/>
            <person name="Abbott S."/>
            <person name="Armstrong J."/>
            <person name="Belter E.A."/>
            <person name="Caruso L."/>
            <person name="Cedroni M."/>
            <person name="Cotton M."/>
            <person name="Davidson T."/>
            <person name="Desai A."/>
            <person name="Elliott G."/>
            <person name="Erb T."/>
            <person name="Fronick C."/>
            <person name="Gaige T."/>
            <person name="Haakenson W."/>
            <person name="Haglund K."/>
            <person name="Holmes A."/>
            <person name="Harkins R."/>
            <person name="Kim K."/>
            <person name="Kruchowski S.S."/>
            <person name="Strong C.M."/>
            <person name="Grewal N."/>
            <person name="Goyea E."/>
            <person name="Hou S."/>
            <person name="Levy A."/>
            <person name="Martinka S."/>
            <person name="Mead K."/>
            <person name="McLellan M.D."/>
            <person name="Meyer R."/>
            <person name="Randall-Maher J."/>
            <person name="Tomlinson C."/>
            <person name="Dauphin-Kohlberg S."/>
            <person name="Kozlowicz-Reilly A."/>
            <person name="Shah N."/>
            <person name="Swearengen-Shahid S."/>
            <person name="Snider J."/>
            <person name="Strong J.T."/>
            <person name="Thompson J."/>
            <person name="Yoakum M."/>
            <person name="Leonard S."/>
            <person name="Pearman C."/>
            <person name="Trani L."/>
            <person name="Radionenko M."/>
            <person name="Waligorski J.E."/>
            <person name="Wang C."/>
            <person name="Rock S.M."/>
            <person name="Tin-Wollam A.-M."/>
            <person name="Maupin R."/>
            <person name="Latreille P."/>
            <person name="Wendl M.C."/>
            <person name="Yang S.-P."/>
            <person name="Pohl C."/>
            <person name="Wallis J.W."/>
            <person name="Spieth J."/>
            <person name="Bieri T.A."/>
            <person name="Berkowicz N."/>
            <person name="Nelson J.O."/>
            <person name="Osborne J."/>
            <person name="Ding L."/>
            <person name="Meyer R."/>
            <person name="Sabo A."/>
            <person name="Shotland Y."/>
            <person name="Sinha P."/>
            <person name="Wohldmann P.E."/>
            <person name="Cook L.L."/>
            <person name="Hickenbotham M.T."/>
            <person name="Eldred J."/>
            <person name="Williams D."/>
            <person name="Jones T.A."/>
            <person name="She X."/>
            <person name="Ciccarelli F.D."/>
            <person name="Izaurralde E."/>
            <person name="Taylor J."/>
            <person name="Schmutz J."/>
            <person name="Myers R.M."/>
            <person name="Cox D.R."/>
            <person name="Huang X."/>
            <person name="McPherson J.D."/>
            <person name="Mardis E.R."/>
            <person name="Clifton S.W."/>
            <person name="Warren W.C."/>
            <person name="Chinwalla A.T."/>
            <person name="Eddy S.R."/>
            <person name="Marra M.A."/>
            <person name="Ovcharenko I."/>
            <person name="Furey T.S."/>
            <person name="Miller W."/>
            <person name="Eichler E.E."/>
            <person name="Bork P."/>
            <person name="Suyama M."/>
            <person name="Torrents D."/>
            <person name="Waterston R.H."/>
            <person name="Wilson R.K."/>
        </authorList>
    </citation>
    <scope>NUCLEOTIDE SEQUENCE [LARGE SCALE GENOMIC DNA]</scope>
</reference>
<reference key="5">
    <citation type="submission" date="2005-09" db="EMBL/GenBank/DDBJ databases">
        <authorList>
            <person name="Mural R.J."/>
            <person name="Istrail S."/>
            <person name="Sutton G.G."/>
            <person name="Florea L."/>
            <person name="Halpern A.L."/>
            <person name="Mobarry C.M."/>
            <person name="Lippert R."/>
            <person name="Walenz B."/>
            <person name="Shatkay H."/>
            <person name="Dew I."/>
            <person name="Miller J.R."/>
            <person name="Flanigan M.J."/>
            <person name="Edwards N.J."/>
            <person name="Bolanos R."/>
            <person name="Fasulo D."/>
            <person name="Halldorsson B.V."/>
            <person name="Hannenhalli S."/>
            <person name="Turner R."/>
            <person name="Yooseph S."/>
            <person name="Lu F."/>
            <person name="Nusskern D.R."/>
            <person name="Shue B.C."/>
            <person name="Zheng X.H."/>
            <person name="Zhong F."/>
            <person name="Delcher A.L."/>
            <person name="Huson D.H."/>
            <person name="Kravitz S.A."/>
            <person name="Mouchard L."/>
            <person name="Reinert K."/>
            <person name="Remington K.A."/>
            <person name="Clark A.G."/>
            <person name="Waterman M.S."/>
            <person name="Eichler E.E."/>
            <person name="Adams M.D."/>
            <person name="Hunkapiller M.W."/>
            <person name="Myers E.W."/>
            <person name="Venter J.C."/>
        </authorList>
    </citation>
    <scope>NUCLEOTIDE SEQUENCE [LARGE SCALE GENOMIC DNA]</scope>
</reference>
<reference key="6">
    <citation type="journal article" date="2004" name="Genome Res.">
        <title>The status, quality, and expansion of the NIH full-length cDNA project: the Mammalian Gene Collection (MGC).</title>
        <authorList>
            <consortium name="The MGC Project Team"/>
        </authorList>
    </citation>
    <scope>NUCLEOTIDE SEQUENCE [LARGE SCALE MRNA]</scope>
    <source>
        <tissue>Uterus</tissue>
    </source>
</reference>
<reference key="7">
    <citation type="submission" date="2000-01" db="EMBL/GenBank/DDBJ databases">
        <title>Human acute promyelocytic leukemia cell line NB4's apoptosis related genes.</title>
        <authorList>
            <person name="Yu W.-Q."/>
            <person name="Sun B.-Z."/>
            <person name="Chai Y.-B."/>
            <person name="Zhu F."/>
            <person name="Liu X.-S."/>
            <person name="Li Z."/>
            <person name="Lu F."/>
            <person name="Yan W."/>
            <person name="Yang H."/>
            <person name="Zhao Z.-L."/>
        </authorList>
    </citation>
    <scope>NUCLEOTIDE SEQUENCE [LARGE SCALE MRNA] OF 270-379</scope>
    <source>
        <tissue>Promyelocytic leukemia</tissue>
    </source>
</reference>
<reference key="8">
    <citation type="journal article" date="2002" name="Mol. Biol. Cell">
        <title>Functional proteomic analysis of human nucleolus.</title>
        <authorList>
            <person name="Scherl A."/>
            <person name="Coute Y."/>
            <person name="Deon C."/>
            <person name="Calle A."/>
            <person name="Kindbeiter K."/>
            <person name="Sanchez J.-C."/>
            <person name="Greco A."/>
            <person name="Hochstrasser D.F."/>
            <person name="Diaz J.-J."/>
        </authorList>
    </citation>
    <scope>SUBCELLULAR LOCATION [LARGE SCALE ANALYSIS]</scope>
    <source>
        <tissue>Cervix carcinoma</tissue>
    </source>
</reference>
<reference key="9">
    <citation type="journal article" date="2008" name="Proc. Natl. Acad. Sci. U.S.A.">
        <title>A quantitative atlas of mitotic phosphorylation.</title>
        <authorList>
            <person name="Dephoure N."/>
            <person name="Zhou C."/>
            <person name="Villen J."/>
            <person name="Beausoleil S.A."/>
            <person name="Bakalarski C.E."/>
            <person name="Elledge S.J."/>
            <person name="Gygi S.P."/>
        </authorList>
    </citation>
    <scope>IDENTIFICATION BY MASS SPECTROMETRY [LARGE SCALE ANALYSIS]</scope>
    <source>
        <tissue>Cervix carcinoma</tissue>
    </source>
</reference>
<reference key="10">
    <citation type="journal article" date="2010" name="Sci. Signal.">
        <title>Quantitative phosphoproteomics reveals widespread full phosphorylation site occupancy during mitosis.</title>
        <authorList>
            <person name="Olsen J.V."/>
            <person name="Vermeulen M."/>
            <person name="Santamaria A."/>
            <person name="Kumar C."/>
            <person name="Miller M.L."/>
            <person name="Jensen L.J."/>
            <person name="Gnad F."/>
            <person name="Cox J."/>
            <person name="Jensen T.S."/>
            <person name="Nigg E.A."/>
            <person name="Brunak S."/>
            <person name="Mann M."/>
        </authorList>
    </citation>
    <scope>PHOSPHORYLATION [LARGE SCALE ANALYSIS] AT SER-215 AND SER-244</scope>
    <scope>IDENTIFICATION BY MASS SPECTROMETRY [LARGE SCALE ANALYSIS]</scope>
    <source>
        <tissue>Cervix carcinoma</tissue>
    </source>
</reference>
<reference key="11">
    <citation type="journal article" date="2011" name="BMC Syst. Biol.">
        <title>Initial characterization of the human central proteome.</title>
        <authorList>
            <person name="Burkard T.R."/>
            <person name="Planyavsky M."/>
            <person name="Kaupe I."/>
            <person name="Breitwieser F.P."/>
            <person name="Buerckstuemmer T."/>
            <person name="Bennett K.L."/>
            <person name="Superti-Furga G."/>
            <person name="Colinge J."/>
        </authorList>
    </citation>
    <scope>IDENTIFICATION BY MASS SPECTROMETRY [LARGE SCALE ANALYSIS]</scope>
</reference>
<reference key="12">
    <citation type="journal article" date="2014" name="Genes Cells">
        <title>Human cell growth regulator Ly-1 antibody reactive homologue accelerates processing of preribosomal RNA.</title>
        <authorList>
            <person name="Miyazawa N."/>
            <person name="Yoshikawa H."/>
            <person name="Magae S."/>
            <person name="Ishikawa H."/>
            <person name="Izumikawa K."/>
            <person name="Terukina G."/>
            <person name="Suzuki A."/>
            <person name="Nakamura-Fujiyama S."/>
            <person name="Miura Y."/>
            <person name="Hayano T."/>
            <person name="Komatsu W."/>
            <person name="Isobe T."/>
            <person name="Takahashi N."/>
        </authorList>
    </citation>
    <scope>FUNCTION</scope>
    <scope>SUBCELLULAR LOCATION</scope>
    <scope>MUTAGENESIS OF 1-MET--TYR-58</scope>
    <scope>DOMAIN</scope>
</reference>
<reference key="13">
    <citation type="journal article" date="2014" name="Mol. Cell. Biochem.">
        <title>Lyar, a cell growth-regulating zinc finger protein, was identified to be associated with cytoplasmic ribosomes in male germ and cancer cells.</title>
        <authorList>
            <person name="Yonezawa K."/>
            <person name="Sugihara Y."/>
            <person name="Oshima K."/>
            <person name="Matsuda T."/>
            <person name="Nadano D."/>
        </authorList>
    </citation>
    <scope>SUBCELLULAR LOCATION</scope>
    <scope>TISSUE SPECIFICITY</scope>
</reference>
<reference key="14">
    <citation type="journal article" date="2014" name="Nat. Struct. Mol. Biol.">
        <title>Uncovering global SUMOylation signaling networks in a site-specific manner.</title>
        <authorList>
            <person name="Hendriks I.A."/>
            <person name="D'Souza R.C."/>
            <person name="Yang B."/>
            <person name="Verlaan-de Vries M."/>
            <person name="Mann M."/>
            <person name="Vertegaal A.C."/>
        </authorList>
    </citation>
    <scope>SUMOYLATION [LARGE SCALE ANALYSIS] AT LYS-207</scope>
    <scope>IDENTIFICATION BY MASS SPECTROMETRY [LARGE SCALE ANALYSIS]</scope>
</reference>
<reference key="15">
    <citation type="journal article" date="2014" name="Nucleic Acids Res.">
        <title>Human fetal globin gene expression is regulated by LYAR.</title>
        <authorList>
            <person name="Ju J."/>
            <person name="Wang Y."/>
            <person name="Liu R."/>
            <person name="Zhang Y."/>
            <person name="Xu Z."/>
            <person name="Wang Y."/>
            <person name="Wu Y."/>
            <person name="Liu M."/>
            <person name="Cerruti L."/>
            <person name="Zou F."/>
            <person name="Ma C."/>
            <person name="Fang M."/>
            <person name="Tan R."/>
            <person name="Jane S.M."/>
            <person name="Zhao Q."/>
        </authorList>
    </citation>
    <scope>FUNCTION</scope>
    <scope>INTERACTION WITH PRMT5</scope>
    <scope>SUBCELLULAR LOCATION</scope>
    <scope>DEVELOPMENTAL STAGE</scope>
</reference>
<reference key="16">
    <citation type="journal article" date="2015" name="J. Biol. Chem.">
        <title>Nucleolar GTP-binding protein-1 (NGP-1) promotes G1 to S phase transition by activating cyclin-dependent kinase inhibitor p21 Cip1/Waf1.</title>
        <authorList>
            <person name="Datta D."/>
            <person name="Anbarasu K."/>
            <person name="Rajabather S."/>
            <person name="Priya R.S."/>
            <person name="Desai P."/>
            <person name="Mahalingam S."/>
        </authorList>
    </citation>
    <scope>INTERACTION WITH GNL2 AND RPL23A</scope>
</reference>
<reference key="17">
    <citation type="journal article" date="2017" name="Cell Death Differ.">
        <title>Upregulation of LYAR induces neuroblastoma cell proliferation and survival.</title>
        <authorList>
            <person name="Sun Y."/>
            <person name="Atmadibrata B."/>
            <person name="Yu D."/>
            <person name="Wong M."/>
            <person name="Liu B."/>
            <person name="Ho N."/>
            <person name="Ling D."/>
            <person name="Tee A.E."/>
            <person name="Wang J."/>
            <person name="Mungrue I.N."/>
            <person name="Liu P.Y."/>
            <person name="Liu T."/>
        </authorList>
    </citation>
    <scope>FUNCTION</scope>
    <scope>INDUCTION BY MYCN</scope>
</reference>
<reference key="18">
    <citation type="journal article" date="2017" name="Nat. Struct. Mol. Biol.">
        <title>Site-specific mapping of the human SUMO proteome reveals co-modification with phosphorylation.</title>
        <authorList>
            <person name="Hendriks I.A."/>
            <person name="Lyon D."/>
            <person name="Young C."/>
            <person name="Jensen L.J."/>
            <person name="Vertegaal A.C."/>
            <person name="Nielsen M.L."/>
        </authorList>
    </citation>
    <scope>SUMOYLATION [LARGE SCALE ANALYSIS] AT LYS-14 AND LYS-207</scope>
    <scope>IDENTIFICATION BY MASS SPECTROMETRY [LARGE SCALE ANALYSIS]</scope>
</reference>
<reference key="19">
    <citation type="journal article" date="2019" name="J. Virol.">
        <title>LYAR suppresses interferon-beta induction by targeting phosphorylated IRF3.</title>
        <authorList>
            <person name="Yang C."/>
            <person name="Liu X."/>
            <person name="Cheng T."/>
            <person name="Xiao R."/>
            <person name="Gao Q."/>
            <person name="Ming F."/>
            <person name="Jin M."/>
            <person name="Chen H."/>
            <person name="Zhou H."/>
        </authorList>
    </citation>
    <scope>FUNCTION</scope>
    <scope>SUBCELLULAR LOCATION</scope>
    <scope>INTERACTION WITH IRF3</scope>
</reference>